<keyword id="KW-0963">Cytoplasm</keyword>
<keyword id="KW-0227">DNA damage</keyword>
<keyword id="KW-0233">DNA recombination</keyword>
<keyword id="KW-0234">DNA repair</keyword>
<keyword id="KW-0255">Endonuclease</keyword>
<keyword id="KW-0378">Hydrolase</keyword>
<keyword id="KW-0460">Magnesium</keyword>
<keyword id="KW-0479">Metal-binding</keyword>
<keyword id="KW-0540">Nuclease</keyword>
<comment type="function">
    <text evidence="1">Endonuclease that resolves Holliday junction intermediates in genetic recombination. Cleaves mobile four-strand junctions by introducing symmetrical nicks in paired strands. Promotes annealing of linear ssDNA with homologous dsDNA. Required for DNA repair, homologous recombination and chromosome segregation.</text>
</comment>
<comment type="catalytic activity">
    <reaction evidence="1">
        <text>Endonucleolytic cleavage at a junction such as a reciprocal single-stranded crossover between two homologous DNA duplexes (Holliday junction).</text>
        <dbReference type="EC" id="3.1.21.10"/>
    </reaction>
</comment>
<comment type="cofactor">
    <cofactor evidence="1">
        <name>Mg(2+)</name>
        <dbReference type="ChEBI" id="CHEBI:18420"/>
    </cofactor>
    <text evidence="1">Binds 1 Mg(2+) ion per subunit.</text>
</comment>
<comment type="subcellular location">
    <subcellularLocation>
        <location evidence="1">Cytoplasm</location>
    </subcellularLocation>
</comment>
<comment type="similarity">
    <text evidence="1">Belongs to the RecU family.</text>
</comment>
<organism>
    <name type="scientific">Bacillus cereus (strain B4264)</name>
    <dbReference type="NCBI Taxonomy" id="405532"/>
    <lineage>
        <taxon>Bacteria</taxon>
        <taxon>Bacillati</taxon>
        <taxon>Bacillota</taxon>
        <taxon>Bacilli</taxon>
        <taxon>Bacillales</taxon>
        <taxon>Bacillaceae</taxon>
        <taxon>Bacillus</taxon>
        <taxon>Bacillus cereus group</taxon>
    </lineage>
</organism>
<protein>
    <recommendedName>
        <fullName evidence="1">Holliday junction resolvase RecU</fullName>
        <ecNumber evidence="1">3.1.21.10</ecNumber>
    </recommendedName>
    <alternativeName>
        <fullName evidence="1">Recombination protein U homolog</fullName>
    </alternativeName>
</protein>
<reference key="1">
    <citation type="submission" date="2008-10" db="EMBL/GenBank/DDBJ databases">
        <title>Genome sequence of Bacillus cereus B4264.</title>
        <authorList>
            <person name="Dodson R.J."/>
            <person name="Durkin A.S."/>
            <person name="Rosovitz M.J."/>
            <person name="Rasko D.A."/>
            <person name="Hoffmaster A."/>
            <person name="Ravel J."/>
            <person name="Sutton G."/>
        </authorList>
    </citation>
    <scope>NUCLEOTIDE SEQUENCE [LARGE SCALE GENOMIC DNA]</scope>
    <source>
        <strain>B4264</strain>
    </source>
</reference>
<gene>
    <name evidence="1" type="primary">recU</name>
    <name type="ordered locus">BCB4264_A1606</name>
</gene>
<evidence type="ECO:0000255" key="1">
    <source>
        <dbReference type="HAMAP-Rule" id="MF_00130"/>
    </source>
</evidence>
<evidence type="ECO:0000256" key="2">
    <source>
        <dbReference type="SAM" id="MobiDB-lite"/>
    </source>
</evidence>
<dbReference type="EC" id="3.1.21.10" evidence="1"/>
<dbReference type="EMBL" id="CP001176">
    <property type="protein sequence ID" value="ACK63168.1"/>
    <property type="molecule type" value="Genomic_DNA"/>
</dbReference>
<dbReference type="RefSeq" id="WP_000155598.1">
    <property type="nucleotide sequence ID" value="NZ_VEHB01000003.1"/>
</dbReference>
<dbReference type="SMR" id="B7HHV4"/>
<dbReference type="KEGG" id="bcb:BCB4264_A1606"/>
<dbReference type="HOGENOM" id="CLU_096340_0_0_9"/>
<dbReference type="Proteomes" id="UP000007096">
    <property type="component" value="Chromosome"/>
</dbReference>
<dbReference type="GO" id="GO:0005737">
    <property type="term" value="C:cytoplasm"/>
    <property type="evidence" value="ECO:0007669"/>
    <property type="project" value="UniProtKB-SubCell"/>
</dbReference>
<dbReference type="GO" id="GO:0004519">
    <property type="term" value="F:endonuclease activity"/>
    <property type="evidence" value="ECO:0007669"/>
    <property type="project" value="UniProtKB-UniRule"/>
</dbReference>
<dbReference type="GO" id="GO:0000287">
    <property type="term" value="F:magnesium ion binding"/>
    <property type="evidence" value="ECO:0007669"/>
    <property type="project" value="UniProtKB-UniRule"/>
</dbReference>
<dbReference type="GO" id="GO:0003676">
    <property type="term" value="F:nucleic acid binding"/>
    <property type="evidence" value="ECO:0007669"/>
    <property type="project" value="InterPro"/>
</dbReference>
<dbReference type="GO" id="GO:0007059">
    <property type="term" value="P:chromosome segregation"/>
    <property type="evidence" value="ECO:0007669"/>
    <property type="project" value="UniProtKB-UniRule"/>
</dbReference>
<dbReference type="GO" id="GO:0006310">
    <property type="term" value="P:DNA recombination"/>
    <property type="evidence" value="ECO:0007669"/>
    <property type="project" value="UniProtKB-UniRule"/>
</dbReference>
<dbReference type="GO" id="GO:0006281">
    <property type="term" value="P:DNA repair"/>
    <property type="evidence" value="ECO:0007669"/>
    <property type="project" value="UniProtKB-UniRule"/>
</dbReference>
<dbReference type="CDD" id="cd22354">
    <property type="entry name" value="RecU-like"/>
    <property type="match status" value="1"/>
</dbReference>
<dbReference type="Gene3D" id="3.40.1350.10">
    <property type="match status" value="1"/>
</dbReference>
<dbReference type="HAMAP" id="MF_00130">
    <property type="entry name" value="RecU"/>
    <property type="match status" value="1"/>
</dbReference>
<dbReference type="InterPro" id="IPR004612">
    <property type="entry name" value="Resolv_RecU"/>
</dbReference>
<dbReference type="InterPro" id="IPR011335">
    <property type="entry name" value="Restrct_endonuc-II-like"/>
</dbReference>
<dbReference type="InterPro" id="IPR011856">
    <property type="entry name" value="tRNA_endonuc-like_dom_sf"/>
</dbReference>
<dbReference type="NCBIfam" id="NF002581">
    <property type="entry name" value="PRK02234.1-2"/>
    <property type="match status" value="1"/>
</dbReference>
<dbReference type="NCBIfam" id="NF002584">
    <property type="entry name" value="PRK02234.1-5"/>
    <property type="match status" value="1"/>
</dbReference>
<dbReference type="NCBIfam" id="NF002585">
    <property type="entry name" value="PRK02234.1-6"/>
    <property type="match status" value="1"/>
</dbReference>
<dbReference type="NCBIfam" id="TIGR00648">
    <property type="entry name" value="recU"/>
    <property type="match status" value="1"/>
</dbReference>
<dbReference type="Pfam" id="PF03838">
    <property type="entry name" value="RecU"/>
    <property type="match status" value="1"/>
</dbReference>
<dbReference type="PIRSF" id="PIRSF037785">
    <property type="entry name" value="RecU"/>
    <property type="match status" value="1"/>
</dbReference>
<dbReference type="SUPFAM" id="SSF52980">
    <property type="entry name" value="Restriction endonuclease-like"/>
    <property type="match status" value="1"/>
</dbReference>
<feature type="chain" id="PRO_1000117724" description="Holliday junction resolvase RecU">
    <location>
        <begin position="1"/>
        <end position="200"/>
    </location>
</feature>
<feature type="region of interest" description="Disordered" evidence="2">
    <location>
        <begin position="1"/>
        <end position="25"/>
    </location>
</feature>
<feature type="compositionally biased region" description="Polar residues" evidence="2">
    <location>
        <begin position="10"/>
        <end position="25"/>
    </location>
</feature>
<feature type="binding site" evidence="1">
    <location>
        <position position="85"/>
    </location>
    <ligand>
        <name>Mg(2+)</name>
        <dbReference type="ChEBI" id="CHEBI:18420"/>
    </ligand>
</feature>
<feature type="binding site" evidence="1">
    <location>
        <position position="87"/>
    </location>
    <ligand>
        <name>Mg(2+)</name>
        <dbReference type="ChEBI" id="CHEBI:18420"/>
    </ligand>
</feature>
<feature type="binding site" evidence="1">
    <location>
        <position position="100"/>
    </location>
    <ligand>
        <name>Mg(2+)</name>
        <dbReference type="ChEBI" id="CHEBI:18420"/>
    </ligand>
</feature>
<feature type="binding site" evidence="1">
    <location>
        <position position="119"/>
    </location>
    <ligand>
        <name>Mg(2+)</name>
        <dbReference type="ChEBI" id="CHEBI:18420"/>
    </ligand>
</feature>
<feature type="site" description="Transition state stabilizer" evidence="1">
    <location>
        <position position="102"/>
    </location>
</feature>
<accession>B7HHV4</accession>
<sequence length="200" mass="23356">MTIRYPNGKRYNQASQPQKTPIKTHTYSNRGMSLEEELNETNQYYLTHNIACVHKKPTPLQIVKVDYPARSAAVVKEAYFKQPSTTDYNGVYKGKYIDFEAKETKNKTSFPLQNFHLHQIEHMKQVVAHNGIAFVIIKFTLFDEFYLLDAKHIIAFWNRQNTGGRKSITKEEIEEHGSLLSCGYHPRIDYIRVLDMVYFS</sequence>
<proteinExistence type="inferred from homology"/>
<name>RECU_BACC4</name>